<gene>
    <name evidence="1" type="primary">recA</name>
    <name type="ordered locus">RAF_ORF1077</name>
</gene>
<proteinExistence type="inferred from homology"/>
<accession>C3PLP0</accession>
<name>RECA_RICAE</name>
<comment type="function">
    <text evidence="1">Can catalyze the hydrolysis of ATP in the presence of single-stranded DNA, the ATP-dependent uptake of single-stranded DNA by duplex DNA, and the ATP-dependent hybridization of homologous single-stranded DNAs. It interacts with LexA causing its activation and leading to its autocatalytic cleavage.</text>
</comment>
<comment type="subcellular location">
    <subcellularLocation>
        <location evidence="1">Cytoplasm</location>
    </subcellularLocation>
</comment>
<comment type="similarity">
    <text evidence="1">Belongs to the RecA family.</text>
</comment>
<dbReference type="EMBL" id="CP001612">
    <property type="protein sequence ID" value="ACP53880.1"/>
    <property type="molecule type" value="Genomic_DNA"/>
</dbReference>
<dbReference type="RefSeq" id="WP_004997434.1">
    <property type="nucleotide sequence ID" value="NC_012633.1"/>
</dbReference>
<dbReference type="SMR" id="C3PLP0"/>
<dbReference type="GeneID" id="95361596"/>
<dbReference type="KEGG" id="raf:RAF_ORF1077"/>
<dbReference type="HOGENOM" id="CLU_040469_3_2_5"/>
<dbReference type="Proteomes" id="UP000002305">
    <property type="component" value="Chromosome"/>
</dbReference>
<dbReference type="GO" id="GO:0005829">
    <property type="term" value="C:cytosol"/>
    <property type="evidence" value="ECO:0007669"/>
    <property type="project" value="TreeGrafter"/>
</dbReference>
<dbReference type="GO" id="GO:0005524">
    <property type="term" value="F:ATP binding"/>
    <property type="evidence" value="ECO:0007669"/>
    <property type="project" value="UniProtKB-UniRule"/>
</dbReference>
<dbReference type="GO" id="GO:0016887">
    <property type="term" value="F:ATP hydrolysis activity"/>
    <property type="evidence" value="ECO:0007669"/>
    <property type="project" value="InterPro"/>
</dbReference>
<dbReference type="GO" id="GO:0140664">
    <property type="term" value="F:ATP-dependent DNA damage sensor activity"/>
    <property type="evidence" value="ECO:0007669"/>
    <property type="project" value="InterPro"/>
</dbReference>
<dbReference type="GO" id="GO:0003684">
    <property type="term" value="F:damaged DNA binding"/>
    <property type="evidence" value="ECO:0007669"/>
    <property type="project" value="UniProtKB-UniRule"/>
</dbReference>
<dbReference type="GO" id="GO:0003697">
    <property type="term" value="F:single-stranded DNA binding"/>
    <property type="evidence" value="ECO:0007669"/>
    <property type="project" value="UniProtKB-UniRule"/>
</dbReference>
<dbReference type="GO" id="GO:0006310">
    <property type="term" value="P:DNA recombination"/>
    <property type="evidence" value="ECO:0007669"/>
    <property type="project" value="UniProtKB-UniRule"/>
</dbReference>
<dbReference type="GO" id="GO:0006281">
    <property type="term" value="P:DNA repair"/>
    <property type="evidence" value="ECO:0007669"/>
    <property type="project" value="UniProtKB-UniRule"/>
</dbReference>
<dbReference type="GO" id="GO:0009432">
    <property type="term" value="P:SOS response"/>
    <property type="evidence" value="ECO:0007669"/>
    <property type="project" value="UniProtKB-UniRule"/>
</dbReference>
<dbReference type="CDD" id="cd00983">
    <property type="entry name" value="RecA"/>
    <property type="match status" value="1"/>
</dbReference>
<dbReference type="FunFam" id="3.40.50.300:FF:000087">
    <property type="entry name" value="Recombinase RecA"/>
    <property type="match status" value="1"/>
</dbReference>
<dbReference type="Gene3D" id="3.40.50.300">
    <property type="entry name" value="P-loop containing nucleotide triphosphate hydrolases"/>
    <property type="match status" value="1"/>
</dbReference>
<dbReference type="HAMAP" id="MF_00268">
    <property type="entry name" value="RecA"/>
    <property type="match status" value="1"/>
</dbReference>
<dbReference type="InterPro" id="IPR003593">
    <property type="entry name" value="AAA+_ATPase"/>
</dbReference>
<dbReference type="InterPro" id="IPR013765">
    <property type="entry name" value="DNA_recomb/repair_RecA"/>
</dbReference>
<dbReference type="InterPro" id="IPR020584">
    <property type="entry name" value="DNA_recomb/repair_RecA_CS"/>
</dbReference>
<dbReference type="InterPro" id="IPR027417">
    <property type="entry name" value="P-loop_NTPase"/>
</dbReference>
<dbReference type="InterPro" id="IPR049261">
    <property type="entry name" value="RecA-like_C"/>
</dbReference>
<dbReference type="InterPro" id="IPR049428">
    <property type="entry name" value="RecA-like_N"/>
</dbReference>
<dbReference type="InterPro" id="IPR020588">
    <property type="entry name" value="RecA_ATP-bd"/>
</dbReference>
<dbReference type="InterPro" id="IPR023400">
    <property type="entry name" value="RecA_C_sf"/>
</dbReference>
<dbReference type="InterPro" id="IPR020587">
    <property type="entry name" value="RecA_monomer-monomer_interface"/>
</dbReference>
<dbReference type="NCBIfam" id="TIGR02012">
    <property type="entry name" value="tigrfam_recA"/>
    <property type="match status" value="1"/>
</dbReference>
<dbReference type="PANTHER" id="PTHR45900:SF1">
    <property type="entry name" value="MITOCHONDRIAL DNA REPAIR PROTEIN RECA HOMOLOG-RELATED"/>
    <property type="match status" value="1"/>
</dbReference>
<dbReference type="PANTHER" id="PTHR45900">
    <property type="entry name" value="RECA"/>
    <property type="match status" value="1"/>
</dbReference>
<dbReference type="Pfam" id="PF00154">
    <property type="entry name" value="RecA"/>
    <property type="match status" value="1"/>
</dbReference>
<dbReference type="Pfam" id="PF21096">
    <property type="entry name" value="RecA_C"/>
    <property type="match status" value="1"/>
</dbReference>
<dbReference type="PRINTS" id="PR00142">
    <property type="entry name" value="RECA"/>
</dbReference>
<dbReference type="SMART" id="SM00382">
    <property type="entry name" value="AAA"/>
    <property type="match status" value="1"/>
</dbReference>
<dbReference type="SUPFAM" id="SSF52540">
    <property type="entry name" value="P-loop containing nucleoside triphosphate hydrolases"/>
    <property type="match status" value="1"/>
</dbReference>
<dbReference type="SUPFAM" id="SSF54752">
    <property type="entry name" value="RecA protein, C-terminal domain"/>
    <property type="match status" value="1"/>
</dbReference>
<dbReference type="PROSITE" id="PS00321">
    <property type="entry name" value="RECA_1"/>
    <property type="match status" value="1"/>
</dbReference>
<dbReference type="PROSITE" id="PS50162">
    <property type="entry name" value="RECA_2"/>
    <property type="match status" value="1"/>
</dbReference>
<dbReference type="PROSITE" id="PS50163">
    <property type="entry name" value="RECA_3"/>
    <property type="match status" value="1"/>
</dbReference>
<evidence type="ECO:0000255" key="1">
    <source>
        <dbReference type="HAMAP-Rule" id="MF_00268"/>
    </source>
</evidence>
<sequence>MSNTDKERAIAAALAQIEKSYGKGSVMKLGQRPHVDIEAVSTGSLGLDIALGIGGVPKGRIIEIFGPESSGKTTLTLHLIAEAQKKGGTCAFIDAEHALDPAYAKKLGVNIDELIISQPDTGEQALEIADTLIRSSGIDMIIIDSVAALVPKSEIEGEMGDAQMASQARLMSQALRKLTASINRTNCIAVFINQIRMKIGVMFGSPETTTGGNALKFYASVRIDIRRIGSIKDKEEVIGSQTKVKVVKNKVSPPFKTADFDIMYGSGISKEGEIIDLGVKLDIVEKSGSWFSYKNVRIGQGRENVKQYLKEHPQISNEIEKIIREKSSKITNINLDQTEEEND</sequence>
<organism>
    <name type="scientific">Rickettsia africae (strain ESF-5)</name>
    <dbReference type="NCBI Taxonomy" id="347255"/>
    <lineage>
        <taxon>Bacteria</taxon>
        <taxon>Pseudomonadati</taxon>
        <taxon>Pseudomonadota</taxon>
        <taxon>Alphaproteobacteria</taxon>
        <taxon>Rickettsiales</taxon>
        <taxon>Rickettsiaceae</taxon>
        <taxon>Rickettsieae</taxon>
        <taxon>Rickettsia</taxon>
        <taxon>spotted fever group</taxon>
    </lineage>
</organism>
<feature type="chain" id="PRO_1000204714" description="Protein RecA">
    <location>
        <begin position="1"/>
        <end position="343"/>
    </location>
</feature>
<feature type="binding site" evidence="1">
    <location>
        <begin position="66"/>
        <end position="73"/>
    </location>
    <ligand>
        <name>ATP</name>
        <dbReference type="ChEBI" id="CHEBI:30616"/>
    </ligand>
</feature>
<protein>
    <recommendedName>
        <fullName evidence="1">Protein RecA</fullName>
    </recommendedName>
    <alternativeName>
        <fullName evidence="1">Recombinase A</fullName>
    </alternativeName>
</protein>
<keyword id="KW-0067">ATP-binding</keyword>
<keyword id="KW-0963">Cytoplasm</keyword>
<keyword id="KW-0227">DNA damage</keyword>
<keyword id="KW-0233">DNA recombination</keyword>
<keyword id="KW-0234">DNA repair</keyword>
<keyword id="KW-0238">DNA-binding</keyword>
<keyword id="KW-0547">Nucleotide-binding</keyword>
<keyword id="KW-0742">SOS response</keyword>
<reference key="1">
    <citation type="journal article" date="2009" name="BMC Genomics">
        <title>Analysis of the Rickettsia africae genome reveals that virulence acquisition in Rickettsia species may be explained by genome reduction.</title>
        <authorList>
            <person name="Fournier P.-E."/>
            <person name="El Karkouri K."/>
            <person name="Leroy Q."/>
            <person name="Robert C."/>
            <person name="Giumelli B."/>
            <person name="Renesto P."/>
            <person name="Socolovschi C."/>
            <person name="Parola P."/>
            <person name="Audic S."/>
            <person name="Raoult D."/>
        </authorList>
    </citation>
    <scope>NUCLEOTIDE SEQUENCE [LARGE SCALE GENOMIC DNA]</scope>
    <source>
        <strain>ESF-5</strain>
    </source>
</reference>